<reference key="1">
    <citation type="submission" date="2007-02" db="EMBL/GenBank/DDBJ databases">
        <title>Complete sequence of Pyrobaculum calidifontis JCM 11548.</title>
        <authorList>
            <consortium name="US DOE Joint Genome Institute"/>
            <person name="Copeland A."/>
            <person name="Lucas S."/>
            <person name="Lapidus A."/>
            <person name="Barry K."/>
            <person name="Glavina del Rio T."/>
            <person name="Dalin E."/>
            <person name="Tice H."/>
            <person name="Pitluck S."/>
            <person name="Chain P."/>
            <person name="Malfatti S."/>
            <person name="Shin M."/>
            <person name="Vergez L."/>
            <person name="Schmutz J."/>
            <person name="Larimer F."/>
            <person name="Land M."/>
            <person name="Hauser L."/>
            <person name="Kyrpides N."/>
            <person name="Mikhailova N."/>
            <person name="Cozen A.E."/>
            <person name="Fitz-Gibbon S.T."/>
            <person name="House C.H."/>
            <person name="Saltikov C."/>
            <person name="Lowe T.M."/>
            <person name="Richardson P."/>
        </authorList>
    </citation>
    <scope>NUCLEOTIDE SEQUENCE [LARGE SCALE GENOMIC DNA]</scope>
    <source>
        <strain>DSM 21063 / JCM 11548 / VA1</strain>
    </source>
</reference>
<organism>
    <name type="scientific">Pyrobaculum calidifontis (strain DSM 21063 / JCM 11548 / VA1)</name>
    <dbReference type="NCBI Taxonomy" id="410359"/>
    <lineage>
        <taxon>Archaea</taxon>
        <taxon>Thermoproteota</taxon>
        <taxon>Thermoprotei</taxon>
        <taxon>Thermoproteales</taxon>
        <taxon>Thermoproteaceae</taxon>
        <taxon>Pyrobaculum</taxon>
    </lineage>
</organism>
<sequence length="147" mass="16444">MPGKKSPYGLFAGGKLKKKRQKFRWNDVTYKRRMLGLAEKYDPLEGAPMARGIVLEKVGVEARKPNAAVRKCVRVQLVKNGKVVTAFVPYDGGLNYINEHDEVIIERIGGPEGKSLGDIPGVRFKVVKVNGVSLWAIWRGKKQKPTR</sequence>
<keyword id="KW-0002">3D-structure</keyword>
<keyword id="KW-0687">Ribonucleoprotein</keyword>
<keyword id="KW-0689">Ribosomal protein</keyword>
<keyword id="KW-0694">RNA-binding</keyword>
<keyword id="KW-0699">rRNA-binding</keyword>
<gene>
    <name evidence="1" type="primary">rps12</name>
    <name type="ordered locus">Pcal_2096</name>
</gene>
<evidence type="ECO:0000255" key="1">
    <source>
        <dbReference type="HAMAP-Rule" id="MF_00403"/>
    </source>
</evidence>
<evidence type="ECO:0000305" key="2"/>
<proteinExistence type="evidence at protein level"/>
<name>RS12_PYRCJ</name>
<comment type="function">
    <text evidence="1">With S4 and S5 plays an important role in translational accuracy. Located at the interface of the 30S and 50S subunits.</text>
</comment>
<comment type="subunit">
    <text evidence="1">Part of the 30S ribosomal subunit.</text>
</comment>
<comment type="similarity">
    <text evidence="1">Belongs to the universal ribosomal protein uS12 family.</text>
</comment>
<feature type="chain" id="PRO_0000296053" description="Small ribosomal subunit protein uS12">
    <location>
        <begin position="1"/>
        <end position="147"/>
    </location>
</feature>
<dbReference type="EMBL" id="CP000561">
    <property type="protein sequence ID" value="ABO09511.1"/>
    <property type="molecule type" value="Genomic_DNA"/>
</dbReference>
<dbReference type="RefSeq" id="WP_011850769.1">
    <property type="nucleotide sequence ID" value="NC_009073.1"/>
</dbReference>
<dbReference type="PDB" id="9E71">
    <property type="method" value="EM"/>
    <property type="resolution" value="2.36 A"/>
    <property type="chains" value="BN=1-147"/>
</dbReference>
<dbReference type="PDB" id="9E7F">
    <property type="method" value="EM"/>
    <property type="resolution" value="2.53 A"/>
    <property type="chains" value="BN=1-147"/>
</dbReference>
<dbReference type="PDBsum" id="9E71"/>
<dbReference type="PDBsum" id="9E7F"/>
<dbReference type="EMDB" id="EMD-47628"/>
<dbReference type="EMDB" id="EMD-47668"/>
<dbReference type="SMR" id="A3MXZ4"/>
<dbReference type="STRING" id="410359.Pcal_2096"/>
<dbReference type="GeneID" id="4910103"/>
<dbReference type="KEGG" id="pcl:Pcal_2096"/>
<dbReference type="eggNOG" id="arCOG04255">
    <property type="taxonomic scope" value="Archaea"/>
</dbReference>
<dbReference type="HOGENOM" id="CLU_115574_0_1_2"/>
<dbReference type="OrthoDB" id="45154at2157"/>
<dbReference type="Proteomes" id="UP000001431">
    <property type="component" value="Chromosome"/>
</dbReference>
<dbReference type="GO" id="GO:0015935">
    <property type="term" value="C:small ribosomal subunit"/>
    <property type="evidence" value="ECO:0007669"/>
    <property type="project" value="InterPro"/>
</dbReference>
<dbReference type="GO" id="GO:0019843">
    <property type="term" value="F:rRNA binding"/>
    <property type="evidence" value="ECO:0007669"/>
    <property type="project" value="UniProtKB-UniRule"/>
</dbReference>
<dbReference type="GO" id="GO:0003735">
    <property type="term" value="F:structural constituent of ribosome"/>
    <property type="evidence" value="ECO:0007669"/>
    <property type="project" value="InterPro"/>
</dbReference>
<dbReference type="GO" id="GO:0006412">
    <property type="term" value="P:translation"/>
    <property type="evidence" value="ECO:0007669"/>
    <property type="project" value="UniProtKB-UniRule"/>
</dbReference>
<dbReference type="CDD" id="cd03367">
    <property type="entry name" value="Ribosomal_S23"/>
    <property type="match status" value="1"/>
</dbReference>
<dbReference type="FunFam" id="2.40.50.140:FF:000007">
    <property type="entry name" value="40S ribosomal protein S23"/>
    <property type="match status" value="1"/>
</dbReference>
<dbReference type="Gene3D" id="2.40.50.140">
    <property type="entry name" value="Nucleic acid-binding proteins"/>
    <property type="match status" value="1"/>
</dbReference>
<dbReference type="HAMAP" id="MF_00403_A">
    <property type="entry name" value="Ribosomal_uS12_A"/>
    <property type="match status" value="1"/>
</dbReference>
<dbReference type="InterPro" id="IPR012340">
    <property type="entry name" value="NA-bd_OB-fold"/>
</dbReference>
<dbReference type="InterPro" id="IPR006032">
    <property type="entry name" value="Ribosomal_uS12"/>
</dbReference>
<dbReference type="InterPro" id="IPR022863">
    <property type="entry name" value="Ribosomal_uS12_arc"/>
</dbReference>
<dbReference type="InterPro" id="IPR005680">
    <property type="entry name" value="Ribosomal_uS12_euk/arc"/>
</dbReference>
<dbReference type="NCBIfam" id="NF003254">
    <property type="entry name" value="PRK04211.1"/>
    <property type="match status" value="1"/>
</dbReference>
<dbReference type="NCBIfam" id="TIGR00982">
    <property type="entry name" value="uS12_E_A"/>
    <property type="match status" value="1"/>
</dbReference>
<dbReference type="PANTHER" id="PTHR11652">
    <property type="entry name" value="30S RIBOSOMAL PROTEIN S12 FAMILY MEMBER"/>
    <property type="match status" value="1"/>
</dbReference>
<dbReference type="Pfam" id="PF00164">
    <property type="entry name" value="Ribosom_S12_S23"/>
    <property type="match status" value="1"/>
</dbReference>
<dbReference type="PIRSF" id="PIRSF002133">
    <property type="entry name" value="Ribosomal_S12/S23"/>
    <property type="match status" value="1"/>
</dbReference>
<dbReference type="SUPFAM" id="SSF50249">
    <property type="entry name" value="Nucleic acid-binding proteins"/>
    <property type="match status" value="1"/>
</dbReference>
<accession>A3MXZ4</accession>
<protein>
    <recommendedName>
        <fullName evidence="1">Small ribosomal subunit protein uS12</fullName>
    </recommendedName>
    <alternativeName>
        <fullName evidence="2">30S ribosomal protein S12</fullName>
    </alternativeName>
</protein>